<organism>
    <name type="scientific">Legionella pneumophila subsp. pneumophila (strain Philadelphia 1 / ATCC 33152 / DSM 7513)</name>
    <dbReference type="NCBI Taxonomy" id="272624"/>
    <lineage>
        <taxon>Bacteria</taxon>
        <taxon>Pseudomonadati</taxon>
        <taxon>Pseudomonadota</taxon>
        <taxon>Gammaproteobacteria</taxon>
        <taxon>Legionellales</taxon>
        <taxon>Legionellaceae</taxon>
        <taxon>Legionella</taxon>
    </lineage>
</organism>
<accession>Q5ZXZ2</accession>
<protein>
    <recommendedName>
        <fullName evidence="1">Aspartate carbamoyltransferase catalytic subunit</fullName>
        <ecNumber evidence="1">2.1.3.2</ecNumber>
    </recommendedName>
    <alternativeName>
        <fullName evidence="1">Aspartate transcarbamylase</fullName>
        <shortName evidence="1">ATCase</shortName>
    </alternativeName>
</protein>
<name>PYRB_LEGPH</name>
<feature type="chain" id="PRO_0000113150" description="Aspartate carbamoyltransferase catalytic subunit">
    <location>
        <begin position="1"/>
        <end position="297"/>
    </location>
</feature>
<feature type="binding site" evidence="1">
    <location>
        <position position="49"/>
    </location>
    <ligand>
        <name>carbamoyl phosphate</name>
        <dbReference type="ChEBI" id="CHEBI:58228"/>
    </ligand>
</feature>
<feature type="binding site" evidence="1">
    <location>
        <position position="50"/>
    </location>
    <ligand>
        <name>carbamoyl phosphate</name>
        <dbReference type="ChEBI" id="CHEBI:58228"/>
    </ligand>
</feature>
<feature type="binding site" evidence="1">
    <location>
        <position position="77"/>
    </location>
    <ligand>
        <name>L-aspartate</name>
        <dbReference type="ChEBI" id="CHEBI:29991"/>
    </ligand>
</feature>
<feature type="binding site" evidence="1">
    <location>
        <position position="99"/>
    </location>
    <ligand>
        <name>carbamoyl phosphate</name>
        <dbReference type="ChEBI" id="CHEBI:58228"/>
    </ligand>
</feature>
<feature type="binding site" evidence="1">
    <location>
        <position position="129"/>
    </location>
    <ligand>
        <name>carbamoyl phosphate</name>
        <dbReference type="ChEBI" id="CHEBI:58228"/>
    </ligand>
</feature>
<feature type="binding site" evidence="1">
    <location>
        <position position="132"/>
    </location>
    <ligand>
        <name>carbamoyl phosphate</name>
        <dbReference type="ChEBI" id="CHEBI:58228"/>
    </ligand>
</feature>
<feature type="binding site" evidence="1">
    <location>
        <position position="162"/>
    </location>
    <ligand>
        <name>L-aspartate</name>
        <dbReference type="ChEBI" id="CHEBI:29991"/>
    </ligand>
</feature>
<feature type="binding site" evidence="1">
    <location>
        <position position="215"/>
    </location>
    <ligand>
        <name>L-aspartate</name>
        <dbReference type="ChEBI" id="CHEBI:29991"/>
    </ligand>
</feature>
<feature type="binding site" evidence="1">
    <location>
        <position position="256"/>
    </location>
    <ligand>
        <name>carbamoyl phosphate</name>
        <dbReference type="ChEBI" id="CHEBI:58228"/>
    </ligand>
</feature>
<feature type="binding site" evidence="1">
    <location>
        <position position="257"/>
    </location>
    <ligand>
        <name>carbamoyl phosphate</name>
        <dbReference type="ChEBI" id="CHEBI:58228"/>
    </ligand>
</feature>
<keyword id="KW-0665">Pyrimidine biosynthesis</keyword>
<keyword id="KW-1185">Reference proteome</keyword>
<keyword id="KW-0808">Transferase</keyword>
<evidence type="ECO:0000255" key="1">
    <source>
        <dbReference type="HAMAP-Rule" id="MF_00001"/>
    </source>
</evidence>
<gene>
    <name evidence="1" type="primary">pyrB</name>
    <name type="ordered locus">lpg0588</name>
</gene>
<comment type="function">
    <text evidence="1">Catalyzes the condensation of carbamoyl phosphate and aspartate to form carbamoyl aspartate and inorganic phosphate, the committed step in the de novo pyrimidine nucleotide biosynthesis pathway.</text>
</comment>
<comment type="catalytic activity">
    <reaction evidence="1">
        <text>carbamoyl phosphate + L-aspartate = N-carbamoyl-L-aspartate + phosphate + H(+)</text>
        <dbReference type="Rhea" id="RHEA:20013"/>
        <dbReference type="ChEBI" id="CHEBI:15378"/>
        <dbReference type="ChEBI" id="CHEBI:29991"/>
        <dbReference type="ChEBI" id="CHEBI:32814"/>
        <dbReference type="ChEBI" id="CHEBI:43474"/>
        <dbReference type="ChEBI" id="CHEBI:58228"/>
        <dbReference type="EC" id="2.1.3.2"/>
    </reaction>
</comment>
<comment type="pathway">
    <text evidence="1">Pyrimidine metabolism; UMP biosynthesis via de novo pathway; (S)-dihydroorotate from bicarbonate: step 2/3.</text>
</comment>
<comment type="subunit">
    <text evidence="1">Heterododecamer (2C3:3R2) of six catalytic PyrB chains organized as two trimers (C3), and six regulatory PyrI chains organized as three dimers (R2).</text>
</comment>
<comment type="similarity">
    <text evidence="1">Belongs to the aspartate/ornithine carbamoyltransferase superfamily. ATCase family.</text>
</comment>
<sequence length="297" mass="33296">MKHFLEISQLSSEQIESLLQRALYFKHTKQYPSYSQSIIANLFYENSTRTRISFELAERHLAMSVVNLDLQTSSETKGEAIEDTIRTLAAMGIQYFVIRHKQDGLQQNLANKLGDTVNIINAGDGTHAHPSQAILDMVTIIEQKKRLDKLKIAILGNIKHSRVANSFQCICSKLGVGELVLISPEIWQPSQVHFGRVTDNLNEGLEGADVVICLRVQKERLLQDDHLDLDFYRNNFALTQKSLSYAKPDAMVMHPGPMNRGVEIDSEVADGNQSCILQQVTNGVYARMAILESLIAS</sequence>
<dbReference type="EC" id="2.1.3.2" evidence="1"/>
<dbReference type="EMBL" id="AE017354">
    <property type="protein sequence ID" value="AAU26677.1"/>
    <property type="molecule type" value="Genomic_DNA"/>
</dbReference>
<dbReference type="RefSeq" id="WP_010946325.1">
    <property type="nucleotide sequence ID" value="NC_002942.5"/>
</dbReference>
<dbReference type="RefSeq" id="YP_094624.1">
    <property type="nucleotide sequence ID" value="NC_002942.5"/>
</dbReference>
<dbReference type="SMR" id="Q5ZXZ2"/>
<dbReference type="STRING" id="272624.lpg0588"/>
<dbReference type="PaxDb" id="272624-lpg0588"/>
<dbReference type="KEGG" id="lpn:lpg0588"/>
<dbReference type="PATRIC" id="fig|272624.6.peg.600"/>
<dbReference type="eggNOG" id="COG0540">
    <property type="taxonomic scope" value="Bacteria"/>
</dbReference>
<dbReference type="HOGENOM" id="CLU_043846_2_0_6"/>
<dbReference type="OrthoDB" id="9774690at2"/>
<dbReference type="UniPathway" id="UPA00070">
    <property type="reaction ID" value="UER00116"/>
</dbReference>
<dbReference type="Proteomes" id="UP000000609">
    <property type="component" value="Chromosome"/>
</dbReference>
<dbReference type="GO" id="GO:0005829">
    <property type="term" value="C:cytosol"/>
    <property type="evidence" value="ECO:0007669"/>
    <property type="project" value="TreeGrafter"/>
</dbReference>
<dbReference type="GO" id="GO:0016597">
    <property type="term" value="F:amino acid binding"/>
    <property type="evidence" value="ECO:0007669"/>
    <property type="project" value="InterPro"/>
</dbReference>
<dbReference type="GO" id="GO:0004070">
    <property type="term" value="F:aspartate carbamoyltransferase activity"/>
    <property type="evidence" value="ECO:0007669"/>
    <property type="project" value="UniProtKB-UniRule"/>
</dbReference>
<dbReference type="GO" id="GO:0006207">
    <property type="term" value="P:'de novo' pyrimidine nucleobase biosynthetic process"/>
    <property type="evidence" value="ECO:0007669"/>
    <property type="project" value="InterPro"/>
</dbReference>
<dbReference type="GO" id="GO:0044205">
    <property type="term" value="P:'de novo' UMP biosynthetic process"/>
    <property type="evidence" value="ECO:0007669"/>
    <property type="project" value="UniProtKB-UniRule"/>
</dbReference>
<dbReference type="GO" id="GO:0006520">
    <property type="term" value="P:amino acid metabolic process"/>
    <property type="evidence" value="ECO:0007669"/>
    <property type="project" value="InterPro"/>
</dbReference>
<dbReference type="Gene3D" id="3.40.50.1370">
    <property type="entry name" value="Aspartate/ornithine carbamoyltransferase"/>
    <property type="match status" value="2"/>
</dbReference>
<dbReference type="HAMAP" id="MF_00001">
    <property type="entry name" value="Asp_carb_tr"/>
    <property type="match status" value="1"/>
</dbReference>
<dbReference type="InterPro" id="IPR006132">
    <property type="entry name" value="Asp/Orn_carbamoyltranf_P-bd"/>
</dbReference>
<dbReference type="InterPro" id="IPR006130">
    <property type="entry name" value="Asp/Orn_carbamoylTrfase"/>
</dbReference>
<dbReference type="InterPro" id="IPR036901">
    <property type="entry name" value="Asp/Orn_carbamoylTrfase_sf"/>
</dbReference>
<dbReference type="InterPro" id="IPR002082">
    <property type="entry name" value="Asp_carbamoyltransf"/>
</dbReference>
<dbReference type="InterPro" id="IPR006131">
    <property type="entry name" value="Asp_carbamoyltransf_Asp/Orn-bd"/>
</dbReference>
<dbReference type="NCBIfam" id="TIGR00670">
    <property type="entry name" value="asp_carb_tr"/>
    <property type="match status" value="1"/>
</dbReference>
<dbReference type="NCBIfam" id="NF002032">
    <property type="entry name" value="PRK00856.1"/>
    <property type="match status" value="1"/>
</dbReference>
<dbReference type="PANTHER" id="PTHR45753:SF6">
    <property type="entry name" value="ASPARTATE CARBAMOYLTRANSFERASE"/>
    <property type="match status" value="1"/>
</dbReference>
<dbReference type="PANTHER" id="PTHR45753">
    <property type="entry name" value="ORNITHINE CARBAMOYLTRANSFERASE, MITOCHONDRIAL"/>
    <property type="match status" value="1"/>
</dbReference>
<dbReference type="Pfam" id="PF00185">
    <property type="entry name" value="OTCace"/>
    <property type="match status" value="1"/>
</dbReference>
<dbReference type="Pfam" id="PF02729">
    <property type="entry name" value="OTCace_N"/>
    <property type="match status" value="1"/>
</dbReference>
<dbReference type="PRINTS" id="PR00100">
    <property type="entry name" value="AOTCASE"/>
</dbReference>
<dbReference type="PRINTS" id="PR00101">
    <property type="entry name" value="ATCASE"/>
</dbReference>
<dbReference type="SUPFAM" id="SSF53671">
    <property type="entry name" value="Aspartate/ornithine carbamoyltransferase"/>
    <property type="match status" value="1"/>
</dbReference>
<dbReference type="PROSITE" id="PS00097">
    <property type="entry name" value="CARBAMOYLTRANSFERASE"/>
    <property type="match status" value="1"/>
</dbReference>
<proteinExistence type="inferred from homology"/>
<reference key="1">
    <citation type="journal article" date="2004" name="Science">
        <title>The genomic sequence of the accidental pathogen Legionella pneumophila.</title>
        <authorList>
            <person name="Chien M."/>
            <person name="Morozova I."/>
            <person name="Shi S."/>
            <person name="Sheng H."/>
            <person name="Chen J."/>
            <person name="Gomez S.M."/>
            <person name="Asamani G."/>
            <person name="Hill K."/>
            <person name="Nuara J."/>
            <person name="Feder M."/>
            <person name="Rineer J."/>
            <person name="Greenberg J.J."/>
            <person name="Steshenko V."/>
            <person name="Park S.H."/>
            <person name="Zhao B."/>
            <person name="Teplitskaya E."/>
            <person name="Edwards J.R."/>
            <person name="Pampou S."/>
            <person name="Georghiou A."/>
            <person name="Chou I.-C."/>
            <person name="Iannuccilli W."/>
            <person name="Ulz M.E."/>
            <person name="Kim D.H."/>
            <person name="Geringer-Sameth A."/>
            <person name="Goldsberry C."/>
            <person name="Morozov P."/>
            <person name="Fischer S.G."/>
            <person name="Segal G."/>
            <person name="Qu X."/>
            <person name="Rzhetsky A."/>
            <person name="Zhang P."/>
            <person name="Cayanis E."/>
            <person name="De Jong P.J."/>
            <person name="Ju J."/>
            <person name="Kalachikov S."/>
            <person name="Shuman H.A."/>
            <person name="Russo J.J."/>
        </authorList>
    </citation>
    <scope>NUCLEOTIDE SEQUENCE [LARGE SCALE GENOMIC DNA]</scope>
    <source>
        <strain>Philadelphia 1 / ATCC 33152 / DSM 7513</strain>
    </source>
</reference>